<name>SYE_LISIN</name>
<evidence type="ECO:0000255" key="1">
    <source>
        <dbReference type="HAMAP-Rule" id="MF_00022"/>
    </source>
</evidence>
<proteinExistence type="inferred from homology"/>
<gene>
    <name evidence="1" type="primary">gltX</name>
    <name type="ordered locus">lin0269</name>
</gene>
<reference key="1">
    <citation type="journal article" date="2001" name="Science">
        <title>Comparative genomics of Listeria species.</title>
        <authorList>
            <person name="Glaser P."/>
            <person name="Frangeul L."/>
            <person name="Buchrieser C."/>
            <person name="Rusniok C."/>
            <person name="Amend A."/>
            <person name="Baquero F."/>
            <person name="Berche P."/>
            <person name="Bloecker H."/>
            <person name="Brandt P."/>
            <person name="Chakraborty T."/>
            <person name="Charbit A."/>
            <person name="Chetouani F."/>
            <person name="Couve E."/>
            <person name="de Daruvar A."/>
            <person name="Dehoux P."/>
            <person name="Domann E."/>
            <person name="Dominguez-Bernal G."/>
            <person name="Duchaud E."/>
            <person name="Durant L."/>
            <person name="Dussurget O."/>
            <person name="Entian K.-D."/>
            <person name="Fsihi H."/>
            <person name="Garcia-del Portillo F."/>
            <person name="Garrido P."/>
            <person name="Gautier L."/>
            <person name="Goebel W."/>
            <person name="Gomez-Lopez N."/>
            <person name="Hain T."/>
            <person name="Hauf J."/>
            <person name="Jackson D."/>
            <person name="Jones L.-M."/>
            <person name="Kaerst U."/>
            <person name="Kreft J."/>
            <person name="Kuhn M."/>
            <person name="Kunst F."/>
            <person name="Kurapkat G."/>
            <person name="Madueno E."/>
            <person name="Maitournam A."/>
            <person name="Mata Vicente J."/>
            <person name="Ng E."/>
            <person name="Nedjari H."/>
            <person name="Nordsiek G."/>
            <person name="Novella S."/>
            <person name="de Pablos B."/>
            <person name="Perez-Diaz J.-C."/>
            <person name="Purcell R."/>
            <person name="Remmel B."/>
            <person name="Rose M."/>
            <person name="Schlueter T."/>
            <person name="Simoes N."/>
            <person name="Tierrez A."/>
            <person name="Vazquez-Boland J.-A."/>
            <person name="Voss H."/>
            <person name="Wehland J."/>
            <person name="Cossart P."/>
        </authorList>
    </citation>
    <scope>NUCLEOTIDE SEQUENCE [LARGE SCALE GENOMIC DNA]</scope>
    <source>
        <strain>ATCC BAA-680 / CLIP 11262</strain>
    </source>
</reference>
<sequence>MSETKRVRVRYAPSPTGFLHIGNARTALFNYLFARHNDGDFIIRIEDTDAKRNVADGEESQMKNLKWLGMDWDEGVDVPGKYGPYRQSERQSIYEPLIQQLLDKGLAYKCYCTEEELEAEREKQKANGEMPRYSGKCRHLTKEQQAEKEAQGFKPSIRFKVPANETITFNDMVKDDVSFESNGIGDFVIAKKDGIPTYNFAVAVDDHLMEISHVLRGDDHISNTPKQILIYNAFGWEPPIFGHMTLIVNESRRKLSKRDGSIIQFIEQYRDLGYLPEALFNFIAMLGWSPEGEEEIFSKEEFIKMFDPKRLSKSPALFDNVKLTWVNNQYVKKLPLNDVVELSLPHLQKAGVVSADLDQAELDWVHKLVSLYHEQMSYGAEIVPLSEMFFADAESITFDEEEKAVLAEETVPKVISAFKKELEALDVLEAAEVKSAIKRVQKETGVKGKGLFMPIRIVTTGEMHGPELPLAIEVLGLEKVLNRLDTWLQNN</sequence>
<accession>Q92F38</accession>
<keyword id="KW-0030">Aminoacyl-tRNA synthetase</keyword>
<keyword id="KW-0067">ATP-binding</keyword>
<keyword id="KW-0963">Cytoplasm</keyword>
<keyword id="KW-0436">Ligase</keyword>
<keyword id="KW-0479">Metal-binding</keyword>
<keyword id="KW-0547">Nucleotide-binding</keyword>
<keyword id="KW-0648">Protein biosynthesis</keyword>
<keyword id="KW-0862">Zinc</keyword>
<protein>
    <recommendedName>
        <fullName evidence="1">Glutamate--tRNA ligase</fullName>
        <ecNumber evidence="1">6.1.1.17</ecNumber>
    </recommendedName>
    <alternativeName>
        <fullName evidence="1">Glutamyl-tRNA synthetase</fullName>
        <shortName evidence="1">GluRS</shortName>
    </alternativeName>
</protein>
<dbReference type="EC" id="6.1.1.17" evidence="1"/>
<dbReference type="EMBL" id="AL596164">
    <property type="protein sequence ID" value="CAC95502.1"/>
    <property type="molecule type" value="Genomic_DNA"/>
</dbReference>
<dbReference type="PIR" id="AF1466">
    <property type="entry name" value="AF1466"/>
</dbReference>
<dbReference type="RefSeq" id="WP_003770124.1">
    <property type="nucleotide sequence ID" value="NC_003212.1"/>
</dbReference>
<dbReference type="SMR" id="Q92F38"/>
<dbReference type="STRING" id="272626.gene:17564596"/>
<dbReference type="KEGG" id="lin:gltX"/>
<dbReference type="eggNOG" id="COG0008">
    <property type="taxonomic scope" value="Bacteria"/>
</dbReference>
<dbReference type="HOGENOM" id="CLU_015768_6_1_9"/>
<dbReference type="OrthoDB" id="9807503at2"/>
<dbReference type="Proteomes" id="UP000002513">
    <property type="component" value="Chromosome"/>
</dbReference>
<dbReference type="GO" id="GO:0005829">
    <property type="term" value="C:cytosol"/>
    <property type="evidence" value="ECO:0007669"/>
    <property type="project" value="TreeGrafter"/>
</dbReference>
<dbReference type="GO" id="GO:0005524">
    <property type="term" value="F:ATP binding"/>
    <property type="evidence" value="ECO:0007669"/>
    <property type="project" value="UniProtKB-UniRule"/>
</dbReference>
<dbReference type="GO" id="GO:0004818">
    <property type="term" value="F:glutamate-tRNA ligase activity"/>
    <property type="evidence" value="ECO:0007669"/>
    <property type="project" value="UniProtKB-UniRule"/>
</dbReference>
<dbReference type="GO" id="GO:0000049">
    <property type="term" value="F:tRNA binding"/>
    <property type="evidence" value="ECO:0007669"/>
    <property type="project" value="InterPro"/>
</dbReference>
<dbReference type="GO" id="GO:0008270">
    <property type="term" value="F:zinc ion binding"/>
    <property type="evidence" value="ECO:0007669"/>
    <property type="project" value="UniProtKB-UniRule"/>
</dbReference>
<dbReference type="GO" id="GO:0006424">
    <property type="term" value="P:glutamyl-tRNA aminoacylation"/>
    <property type="evidence" value="ECO:0007669"/>
    <property type="project" value="UniProtKB-UniRule"/>
</dbReference>
<dbReference type="CDD" id="cd00808">
    <property type="entry name" value="GluRS_core"/>
    <property type="match status" value="1"/>
</dbReference>
<dbReference type="FunFam" id="1.10.10.350:FF:000002">
    <property type="entry name" value="Glutamate--tRNA ligase"/>
    <property type="match status" value="1"/>
</dbReference>
<dbReference type="FunFam" id="3.40.50.620:FF:000007">
    <property type="entry name" value="Glutamate--tRNA ligase"/>
    <property type="match status" value="1"/>
</dbReference>
<dbReference type="Gene3D" id="1.10.10.350">
    <property type="match status" value="1"/>
</dbReference>
<dbReference type="Gene3D" id="3.40.50.620">
    <property type="entry name" value="HUPs"/>
    <property type="match status" value="1"/>
</dbReference>
<dbReference type="HAMAP" id="MF_00022">
    <property type="entry name" value="Glu_tRNA_synth_type1"/>
    <property type="match status" value="1"/>
</dbReference>
<dbReference type="InterPro" id="IPR045462">
    <property type="entry name" value="aa-tRNA-synth_I_cd-bd"/>
</dbReference>
<dbReference type="InterPro" id="IPR020751">
    <property type="entry name" value="aa-tRNA-synth_I_codon-bd_sub2"/>
</dbReference>
<dbReference type="InterPro" id="IPR001412">
    <property type="entry name" value="aa-tRNA-synth_I_CS"/>
</dbReference>
<dbReference type="InterPro" id="IPR008925">
    <property type="entry name" value="aa_tRNA-synth_I_cd-bd_sf"/>
</dbReference>
<dbReference type="InterPro" id="IPR004527">
    <property type="entry name" value="Glu-tRNA-ligase_bac/mito"/>
</dbReference>
<dbReference type="InterPro" id="IPR000924">
    <property type="entry name" value="Glu/Gln-tRNA-synth"/>
</dbReference>
<dbReference type="InterPro" id="IPR020058">
    <property type="entry name" value="Glu/Gln-tRNA-synth_Ib_cat-dom"/>
</dbReference>
<dbReference type="InterPro" id="IPR049940">
    <property type="entry name" value="GluQ/Sye"/>
</dbReference>
<dbReference type="InterPro" id="IPR033910">
    <property type="entry name" value="GluRS_core"/>
</dbReference>
<dbReference type="InterPro" id="IPR014729">
    <property type="entry name" value="Rossmann-like_a/b/a_fold"/>
</dbReference>
<dbReference type="NCBIfam" id="TIGR00464">
    <property type="entry name" value="gltX_bact"/>
    <property type="match status" value="1"/>
</dbReference>
<dbReference type="PANTHER" id="PTHR43311">
    <property type="entry name" value="GLUTAMATE--TRNA LIGASE"/>
    <property type="match status" value="1"/>
</dbReference>
<dbReference type="PANTHER" id="PTHR43311:SF2">
    <property type="entry name" value="GLUTAMATE--TRNA LIGASE, MITOCHONDRIAL-RELATED"/>
    <property type="match status" value="1"/>
</dbReference>
<dbReference type="Pfam" id="PF19269">
    <property type="entry name" value="Anticodon_2"/>
    <property type="match status" value="1"/>
</dbReference>
<dbReference type="Pfam" id="PF00749">
    <property type="entry name" value="tRNA-synt_1c"/>
    <property type="match status" value="1"/>
</dbReference>
<dbReference type="PRINTS" id="PR00987">
    <property type="entry name" value="TRNASYNTHGLU"/>
</dbReference>
<dbReference type="SUPFAM" id="SSF48163">
    <property type="entry name" value="An anticodon-binding domain of class I aminoacyl-tRNA synthetases"/>
    <property type="match status" value="1"/>
</dbReference>
<dbReference type="SUPFAM" id="SSF52374">
    <property type="entry name" value="Nucleotidylyl transferase"/>
    <property type="match status" value="1"/>
</dbReference>
<dbReference type="PROSITE" id="PS00178">
    <property type="entry name" value="AA_TRNA_LIGASE_I"/>
    <property type="match status" value="1"/>
</dbReference>
<organism>
    <name type="scientific">Listeria innocua serovar 6a (strain ATCC BAA-680 / CLIP 11262)</name>
    <dbReference type="NCBI Taxonomy" id="272626"/>
    <lineage>
        <taxon>Bacteria</taxon>
        <taxon>Bacillati</taxon>
        <taxon>Bacillota</taxon>
        <taxon>Bacilli</taxon>
        <taxon>Bacillales</taxon>
        <taxon>Listeriaceae</taxon>
        <taxon>Listeria</taxon>
    </lineage>
</organism>
<comment type="function">
    <text evidence="1">Catalyzes the attachment of glutamate to tRNA(Glu) in a two-step reaction: glutamate is first activated by ATP to form Glu-AMP and then transferred to the acceptor end of tRNA(Glu).</text>
</comment>
<comment type="catalytic activity">
    <reaction evidence="1">
        <text>tRNA(Glu) + L-glutamate + ATP = L-glutamyl-tRNA(Glu) + AMP + diphosphate</text>
        <dbReference type="Rhea" id="RHEA:23540"/>
        <dbReference type="Rhea" id="RHEA-COMP:9663"/>
        <dbReference type="Rhea" id="RHEA-COMP:9680"/>
        <dbReference type="ChEBI" id="CHEBI:29985"/>
        <dbReference type="ChEBI" id="CHEBI:30616"/>
        <dbReference type="ChEBI" id="CHEBI:33019"/>
        <dbReference type="ChEBI" id="CHEBI:78442"/>
        <dbReference type="ChEBI" id="CHEBI:78520"/>
        <dbReference type="ChEBI" id="CHEBI:456215"/>
        <dbReference type="EC" id="6.1.1.17"/>
    </reaction>
</comment>
<comment type="cofactor">
    <cofactor evidence="1">
        <name>Zn(2+)</name>
        <dbReference type="ChEBI" id="CHEBI:29105"/>
    </cofactor>
    <text evidence="1">Binds 1 zinc ion per subunit.</text>
</comment>
<comment type="subunit">
    <text evidence="1">Monomer.</text>
</comment>
<comment type="subcellular location">
    <subcellularLocation>
        <location evidence="1">Cytoplasm</location>
    </subcellularLocation>
</comment>
<comment type="similarity">
    <text evidence="1">Belongs to the class-I aminoacyl-tRNA synthetase family. Glutamate--tRNA ligase type 1 subfamily.</text>
</comment>
<feature type="chain" id="PRO_0000119592" description="Glutamate--tRNA ligase">
    <location>
        <begin position="1"/>
        <end position="491"/>
    </location>
</feature>
<feature type="short sequence motif" description="'HIGH' region" evidence="1">
    <location>
        <begin position="13"/>
        <end position="23"/>
    </location>
</feature>
<feature type="short sequence motif" description="'KMSKS' region" evidence="1">
    <location>
        <begin position="254"/>
        <end position="258"/>
    </location>
</feature>
<feature type="binding site" evidence="1">
    <location>
        <position position="110"/>
    </location>
    <ligand>
        <name>Zn(2+)</name>
        <dbReference type="ChEBI" id="CHEBI:29105"/>
    </ligand>
</feature>
<feature type="binding site" evidence="1">
    <location>
        <position position="112"/>
    </location>
    <ligand>
        <name>Zn(2+)</name>
        <dbReference type="ChEBI" id="CHEBI:29105"/>
    </ligand>
</feature>
<feature type="binding site" evidence="1">
    <location>
        <position position="137"/>
    </location>
    <ligand>
        <name>Zn(2+)</name>
        <dbReference type="ChEBI" id="CHEBI:29105"/>
    </ligand>
</feature>
<feature type="binding site" evidence="1">
    <location>
        <position position="139"/>
    </location>
    <ligand>
        <name>Zn(2+)</name>
        <dbReference type="ChEBI" id="CHEBI:29105"/>
    </ligand>
</feature>
<feature type="binding site" evidence="1">
    <location>
        <position position="257"/>
    </location>
    <ligand>
        <name>ATP</name>
        <dbReference type="ChEBI" id="CHEBI:30616"/>
    </ligand>
</feature>